<organism>
    <name type="scientific">Arabidopsis thaliana</name>
    <name type="common">Mouse-ear cress</name>
    <dbReference type="NCBI Taxonomy" id="3702"/>
    <lineage>
        <taxon>Eukaryota</taxon>
        <taxon>Viridiplantae</taxon>
        <taxon>Streptophyta</taxon>
        <taxon>Embryophyta</taxon>
        <taxon>Tracheophyta</taxon>
        <taxon>Spermatophyta</taxon>
        <taxon>Magnoliopsida</taxon>
        <taxon>eudicotyledons</taxon>
        <taxon>Gunneridae</taxon>
        <taxon>Pentapetalae</taxon>
        <taxon>rosids</taxon>
        <taxon>malvids</taxon>
        <taxon>Brassicales</taxon>
        <taxon>Brassicaceae</taxon>
        <taxon>Camelineae</taxon>
        <taxon>Arabidopsis</taxon>
    </lineage>
</organism>
<gene>
    <name type="primary">AHA10</name>
    <name type="ordered locus">At1g17260</name>
    <name type="ORF">F20D23.4</name>
</gene>
<evidence type="ECO:0000250" key="1"/>
<evidence type="ECO:0000250" key="2">
    <source>
        <dbReference type="UniProtKB" id="P19456"/>
    </source>
</evidence>
<evidence type="ECO:0000250" key="3">
    <source>
        <dbReference type="UniProtKB" id="P20649"/>
    </source>
</evidence>
<evidence type="ECO:0000255" key="4"/>
<evidence type="ECO:0000269" key="5">
    <source>
    </source>
</evidence>
<evidence type="ECO:0000305" key="6"/>
<protein>
    <recommendedName>
        <fullName>ATPase 10, plasma membrane-type</fullName>
        <ecNumber>7.1.2.1</ecNumber>
    </recommendedName>
    <alternativeName>
        <fullName>Proton pump 10</fullName>
    </alternativeName>
</protein>
<keyword id="KW-0067">ATP-binding</keyword>
<keyword id="KW-0375">Hydrogen ion transport</keyword>
<keyword id="KW-0406">Ion transport</keyword>
<keyword id="KW-0460">Magnesium</keyword>
<keyword id="KW-0472">Membrane</keyword>
<keyword id="KW-0479">Metal-binding</keyword>
<keyword id="KW-0547">Nucleotide-binding</keyword>
<keyword id="KW-0597">Phosphoprotein</keyword>
<keyword id="KW-1185">Reference proteome</keyword>
<keyword id="KW-1278">Translocase</keyword>
<keyword id="KW-0812">Transmembrane</keyword>
<keyword id="KW-1133">Transmembrane helix</keyword>
<keyword id="KW-0813">Transport</keyword>
<feature type="chain" id="PRO_0000046283" description="ATPase 10, plasma membrane-type">
    <location>
        <begin position="1"/>
        <end position="947"/>
    </location>
</feature>
<feature type="topological domain" description="Cytoplasmic" evidence="4">
    <location>
        <begin position="1"/>
        <end position="69"/>
    </location>
</feature>
<feature type="transmembrane region" description="Helical; Name=1" evidence="4">
    <location>
        <begin position="70"/>
        <end position="89"/>
    </location>
</feature>
<feature type="topological domain" description="Extracellular" evidence="4">
    <location>
        <begin position="90"/>
        <end position="101"/>
    </location>
</feature>
<feature type="transmembrane region" description="Helical; Name=2" evidence="4">
    <location>
        <begin position="102"/>
        <end position="122"/>
    </location>
</feature>
<feature type="topological domain" description="Cytoplasmic" evidence="4">
    <location>
        <begin position="123"/>
        <end position="251"/>
    </location>
</feature>
<feature type="transmembrane region" description="Helical; Name=3" evidence="4">
    <location>
        <begin position="252"/>
        <end position="272"/>
    </location>
</feature>
<feature type="topological domain" description="Extracellular" evidence="4">
    <location>
        <begin position="273"/>
        <end position="281"/>
    </location>
</feature>
<feature type="transmembrane region" description="Helical; Name=4" evidence="4">
    <location>
        <begin position="282"/>
        <end position="299"/>
    </location>
</feature>
<feature type="topological domain" description="Cytoplasmic" evidence="4">
    <location>
        <begin position="300"/>
        <end position="650"/>
    </location>
</feature>
<feature type="transmembrane region" description="Helical; Name=5" evidence="4">
    <location>
        <begin position="651"/>
        <end position="672"/>
    </location>
</feature>
<feature type="topological domain" description="Extracellular" evidence="4">
    <location>
        <begin position="673"/>
        <end position="677"/>
    </location>
</feature>
<feature type="transmembrane region" description="Helical; Name=6" evidence="4">
    <location>
        <begin position="678"/>
        <end position="700"/>
    </location>
</feature>
<feature type="topological domain" description="Cytoplasmic" evidence="4">
    <location>
        <begin position="701"/>
        <end position="716"/>
    </location>
</feature>
<feature type="transmembrane region" description="Helical; Name=7" evidence="4">
    <location>
        <begin position="717"/>
        <end position="737"/>
    </location>
</feature>
<feature type="topological domain" description="Extracellular" evidence="4">
    <location>
        <begin position="738"/>
        <end position="758"/>
    </location>
</feature>
<feature type="transmembrane region" description="Helical; Name=8" evidence="4">
    <location>
        <begin position="759"/>
        <end position="779"/>
    </location>
</feature>
<feature type="topological domain" description="Cytoplasmic" evidence="4">
    <location>
        <begin position="780"/>
        <end position="791"/>
    </location>
</feature>
<feature type="transmembrane region" description="Helical; Name=9" evidence="4">
    <location>
        <begin position="792"/>
        <end position="812"/>
    </location>
</feature>
<feature type="topological domain" description="Extracellular" evidence="4">
    <location>
        <begin position="813"/>
        <end position="820"/>
    </location>
</feature>
<feature type="transmembrane region" description="Helical; Name=10" evidence="4">
    <location>
        <begin position="821"/>
        <end position="841"/>
    </location>
</feature>
<feature type="topological domain" description="Cytoplasmic" evidence="4">
    <location>
        <begin position="842"/>
        <end position="947"/>
    </location>
</feature>
<feature type="active site" description="4-aspartylphosphate intermediate" evidence="1">
    <location>
        <position position="337"/>
    </location>
</feature>
<feature type="binding site" evidence="1">
    <location>
        <position position="595"/>
    </location>
    <ligand>
        <name>Mg(2+)</name>
        <dbReference type="ChEBI" id="CHEBI:18420"/>
    </ligand>
</feature>
<feature type="binding site" evidence="1">
    <location>
        <position position="599"/>
    </location>
    <ligand>
        <name>Mg(2+)</name>
        <dbReference type="ChEBI" id="CHEBI:18420"/>
    </ligand>
</feature>
<feature type="modified residue" description="Phosphoserine" evidence="2">
    <location>
        <position position="897"/>
    </location>
</feature>
<feature type="modified residue" description="Phosphoserine" evidence="2">
    <location>
        <position position="929"/>
    </location>
</feature>
<feature type="modified residue" description="Phosphothreonine" evidence="3">
    <location>
        <position position="946"/>
    </location>
</feature>
<sequence length="947" mass="104815">MAEDLDKPLLDPDTFNRKGIDLGILPLEEVFEYLRTSPQGLLSGDAEERLKIFGPNRLEEKQENRFVKFLGFMWNPLSWVMEAAALMAIALANSQSLGPDWEDFTGIVCLLLINATISFFEENNAGNAAAALMARLALKTRVLRDGQWQEQDASILVPGDIISIKLGDIIPADARLLEGDPLKIDQSVLTGESLPVTKKKGEQVFSGSTCKQGEIEAVVIATGSTTFFGKTARLVDSTDVTGHFQQVLTSIGNFCICSIAVGMVLEIIIMFPVQHRSYRIGINNLLVLLIGGIPIAMPTVLSVTLAIGSHRLSQQGAITKRMTAIEEMAGMDVLCCDKTGTLTLNSLTVDKNLIEVFVDYMDKDTILLLAGRASRLENQDAIDAAIVSMLADPREARANIREIHFLPFNPVDKRTAITYIDSDGKWYRATKGAPEQVLNLCQQKNEIAQRVYAIIDRFAEKGLRSLAVAYQEIPEKSNNSPGGPWRFCGLLPLFDPPRHDSGETILRALSLGVCVKMITGDQLAIAKETGRRLGMGTNMYPSSSLLGHNNDEHEAIPVDELIEMADGFAGVFPEHKYEIVKILQEMKHVVGMTGDGVNDAPALKKADIGIAVADATDAARSSADIVLTDPGLSVIISAVLTSRAIFQRMRNYTVYAVSITIRIVLGFTLLALIWEYDFPPFMVLIIAILNDGTIMTISKDRVRPSPTPESWKLNQIFATGIVIGTYLALVTVLFYWIIVSTTFFEKHFHVKSIANNSEQVSSAMYLQVSIISQALIFVTRSRGWSFFERPGTLLIFAFILAQLAATLIAVYANISFAKITGIGWRWAGVIWLYSLIFYIPLDVIKFVFHYALSGEAWNLVLDRKTAFTYKKDYGKDDGSPNVTISQRSRSAEELRGSRSRASWIAEQTRRRAEIARLLEVHSVSRHLESVIKLKQIDQRMIRAAHTV</sequence>
<reference key="1">
    <citation type="journal article" date="1994" name="Mol. Gen. Genet.">
        <title>The plasma membrane H(+)-ATPase gene family in Arabidopsis: genomic sequence of AHA10 which is expressed primarily in developing seeds.</title>
        <authorList>
            <person name="Harper J.F."/>
            <person name="Manney L."/>
            <person name="Sussman M.R."/>
        </authorList>
    </citation>
    <scope>NUCLEOTIDE SEQUENCE [GENOMIC DNA]</scope>
    <source>
        <strain>cv. Columbia</strain>
    </source>
</reference>
<reference key="2">
    <citation type="journal article" date="2000" name="Nature">
        <title>Sequence and analysis of chromosome 1 of the plant Arabidopsis thaliana.</title>
        <authorList>
            <person name="Theologis A."/>
            <person name="Ecker J.R."/>
            <person name="Palm C.J."/>
            <person name="Federspiel N.A."/>
            <person name="Kaul S."/>
            <person name="White O."/>
            <person name="Alonso J."/>
            <person name="Altafi H."/>
            <person name="Araujo R."/>
            <person name="Bowman C.L."/>
            <person name="Brooks S.Y."/>
            <person name="Buehler E."/>
            <person name="Chan A."/>
            <person name="Chao Q."/>
            <person name="Chen H."/>
            <person name="Cheuk R.F."/>
            <person name="Chin C.W."/>
            <person name="Chung M.K."/>
            <person name="Conn L."/>
            <person name="Conway A.B."/>
            <person name="Conway A.R."/>
            <person name="Creasy T.H."/>
            <person name="Dewar K."/>
            <person name="Dunn P."/>
            <person name="Etgu P."/>
            <person name="Feldblyum T.V."/>
            <person name="Feng J.-D."/>
            <person name="Fong B."/>
            <person name="Fujii C.Y."/>
            <person name="Gill J.E."/>
            <person name="Goldsmith A.D."/>
            <person name="Haas B."/>
            <person name="Hansen N.F."/>
            <person name="Hughes B."/>
            <person name="Huizar L."/>
            <person name="Hunter J.L."/>
            <person name="Jenkins J."/>
            <person name="Johnson-Hopson C."/>
            <person name="Khan S."/>
            <person name="Khaykin E."/>
            <person name="Kim C.J."/>
            <person name="Koo H.L."/>
            <person name="Kremenetskaia I."/>
            <person name="Kurtz D.B."/>
            <person name="Kwan A."/>
            <person name="Lam B."/>
            <person name="Langin-Hooper S."/>
            <person name="Lee A."/>
            <person name="Lee J.M."/>
            <person name="Lenz C.A."/>
            <person name="Li J.H."/>
            <person name="Li Y.-P."/>
            <person name="Lin X."/>
            <person name="Liu S.X."/>
            <person name="Liu Z.A."/>
            <person name="Luros J.S."/>
            <person name="Maiti R."/>
            <person name="Marziali A."/>
            <person name="Militscher J."/>
            <person name="Miranda M."/>
            <person name="Nguyen M."/>
            <person name="Nierman W.C."/>
            <person name="Osborne B.I."/>
            <person name="Pai G."/>
            <person name="Peterson J."/>
            <person name="Pham P.K."/>
            <person name="Rizzo M."/>
            <person name="Rooney T."/>
            <person name="Rowley D."/>
            <person name="Sakano H."/>
            <person name="Salzberg S.L."/>
            <person name="Schwartz J.R."/>
            <person name="Shinn P."/>
            <person name="Southwick A.M."/>
            <person name="Sun H."/>
            <person name="Tallon L.J."/>
            <person name="Tambunga G."/>
            <person name="Toriumi M.J."/>
            <person name="Town C.D."/>
            <person name="Utterback T."/>
            <person name="Van Aken S."/>
            <person name="Vaysberg M."/>
            <person name="Vysotskaia V.S."/>
            <person name="Walker M."/>
            <person name="Wu D."/>
            <person name="Yu G."/>
            <person name="Fraser C.M."/>
            <person name="Venter J.C."/>
            <person name="Davis R.W."/>
        </authorList>
    </citation>
    <scope>NUCLEOTIDE SEQUENCE [LARGE SCALE GENOMIC DNA]</scope>
    <source>
        <strain>cv. Columbia</strain>
    </source>
</reference>
<reference key="3">
    <citation type="journal article" date="2017" name="Plant J.">
        <title>Araport11: a complete reannotation of the Arabidopsis thaliana reference genome.</title>
        <authorList>
            <person name="Cheng C.Y."/>
            <person name="Krishnakumar V."/>
            <person name="Chan A.P."/>
            <person name="Thibaud-Nissen F."/>
            <person name="Schobel S."/>
            <person name="Town C.D."/>
        </authorList>
    </citation>
    <scope>GENOME REANNOTATION</scope>
    <source>
        <strain>cv. Columbia</strain>
    </source>
</reference>
<reference key="4">
    <citation type="journal article" date="2005" name="Plant Cell Physiol.">
        <title>Biochemical characterization of plasma membrane H+-ATPase activation in guard cell protoplasts of Arabidopsis thaliana in response to blue light.</title>
        <authorList>
            <person name="Ueno K."/>
            <person name="Kinoshita T."/>
            <person name="Inoue S."/>
            <person name="Emi T."/>
            <person name="Shimazaki K."/>
        </authorList>
    </citation>
    <scope>TISSUE SPECIFICITY</scope>
    <source>
        <strain>cv. Columbia GL1</strain>
    </source>
</reference>
<reference key="5">
    <citation type="journal article" date="2013" name="Plant Physiol. Biochem.">
        <title>The flavonoid biosynthetic pathway in Arabidopsis: Structural and genetic diversity.</title>
        <authorList>
            <person name="Saito K."/>
            <person name="Yonekura-Sakakibara K."/>
            <person name="Nakabayashi R."/>
            <person name="Higashi Y."/>
            <person name="Yamazaki M."/>
            <person name="Tohge T."/>
            <person name="Fernie A.R."/>
        </authorList>
    </citation>
    <scope>REVIEW</scope>
    <scope>NOMENCLATURE</scope>
</reference>
<name>PMA10_ARATH</name>
<proteinExistence type="evidence at transcript level"/>
<dbReference type="EC" id="7.1.2.1"/>
<dbReference type="EMBL" id="S74033">
    <property type="protein sequence ID" value="AAB32310.2"/>
    <property type="molecule type" value="Genomic_DNA"/>
</dbReference>
<dbReference type="EMBL" id="AC007651">
    <property type="protein sequence ID" value="AAD50009.3"/>
    <property type="molecule type" value="Genomic_DNA"/>
</dbReference>
<dbReference type="EMBL" id="CP002684">
    <property type="protein sequence ID" value="AEE29565.1"/>
    <property type="molecule type" value="Genomic_DNA"/>
</dbReference>
<dbReference type="PIR" id="S66367">
    <property type="entry name" value="S66367"/>
</dbReference>
<dbReference type="RefSeq" id="NP_173169.2">
    <property type="nucleotide sequence ID" value="NM_101587.2"/>
</dbReference>
<dbReference type="SMR" id="Q43128"/>
<dbReference type="BioGRID" id="23537">
    <property type="interactions" value="11"/>
</dbReference>
<dbReference type="FunCoup" id="Q43128">
    <property type="interactions" value="127"/>
</dbReference>
<dbReference type="IntAct" id="Q43128">
    <property type="interactions" value="4"/>
</dbReference>
<dbReference type="STRING" id="3702.Q43128"/>
<dbReference type="GlyGen" id="Q43128">
    <property type="glycosylation" value="1 site"/>
</dbReference>
<dbReference type="iPTMnet" id="Q43128"/>
<dbReference type="PaxDb" id="3702-AT1G17260.1"/>
<dbReference type="ProteomicsDB" id="234677"/>
<dbReference type="EnsemblPlants" id="AT1G17260.1">
    <property type="protein sequence ID" value="AT1G17260.1"/>
    <property type="gene ID" value="AT1G17260"/>
</dbReference>
<dbReference type="GeneID" id="838297"/>
<dbReference type="Gramene" id="AT1G17260.1">
    <property type="protein sequence ID" value="AT1G17260.1"/>
    <property type="gene ID" value="AT1G17260"/>
</dbReference>
<dbReference type="KEGG" id="ath:AT1G17260"/>
<dbReference type="Araport" id="AT1G17260"/>
<dbReference type="TAIR" id="AT1G17260">
    <property type="gene designation" value="AHA10"/>
</dbReference>
<dbReference type="eggNOG" id="KOG0205">
    <property type="taxonomic scope" value="Eukaryota"/>
</dbReference>
<dbReference type="HOGENOM" id="CLU_002360_6_4_1"/>
<dbReference type="InParanoid" id="Q43128"/>
<dbReference type="OMA" id="ILNMSEC"/>
<dbReference type="PhylomeDB" id="Q43128"/>
<dbReference type="BioCyc" id="ARA:AT1G17260-MONOMER"/>
<dbReference type="PRO" id="PR:Q43128"/>
<dbReference type="Proteomes" id="UP000006548">
    <property type="component" value="Chromosome 1"/>
</dbReference>
<dbReference type="ExpressionAtlas" id="Q43128">
    <property type="expression patterns" value="baseline and differential"/>
</dbReference>
<dbReference type="GO" id="GO:0009705">
    <property type="term" value="C:plant-type vacuole membrane"/>
    <property type="evidence" value="ECO:0000314"/>
    <property type="project" value="TAIR"/>
</dbReference>
<dbReference type="GO" id="GO:0009506">
    <property type="term" value="C:plasmodesma"/>
    <property type="evidence" value="ECO:0007005"/>
    <property type="project" value="TAIR"/>
</dbReference>
<dbReference type="GO" id="GO:0005524">
    <property type="term" value="F:ATP binding"/>
    <property type="evidence" value="ECO:0007669"/>
    <property type="project" value="UniProtKB-KW"/>
</dbReference>
<dbReference type="GO" id="GO:0016887">
    <property type="term" value="F:ATP hydrolysis activity"/>
    <property type="evidence" value="ECO:0007669"/>
    <property type="project" value="InterPro"/>
</dbReference>
<dbReference type="GO" id="GO:0019829">
    <property type="term" value="F:ATPase-coupled monoatomic cation transmembrane transporter activity"/>
    <property type="evidence" value="ECO:0000250"/>
    <property type="project" value="TAIR"/>
</dbReference>
<dbReference type="GO" id="GO:0046872">
    <property type="term" value="F:metal ion binding"/>
    <property type="evidence" value="ECO:0007669"/>
    <property type="project" value="UniProtKB-KW"/>
</dbReference>
<dbReference type="GO" id="GO:0015662">
    <property type="term" value="F:P-type ion transporter activity"/>
    <property type="evidence" value="ECO:0000250"/>
    <property type="project" value="TAIR"/>
</dbReference>
<dbReference type="GO" id="GO:0008553">
    <property type="term" value="F:P-type proton-exporting transporter activity"/>
    <property type="evidence" value="ECO:0000315"/>
    <property type="project" value="TAIR"/>
</dbReference>
<dbReference type="GO" id="GO:0010023">
    <property type="term" value="P:proanthocyanidin biosynthetic process"/>
    <property type="evidence" value="ECO:0000315"/>
    <property type="project" value="TAIR"/>
</dbReference>
<dbReference type="GO" id="GO:0120029">
    <property type="term" value="P:proton export across plasma membrane"/>
    <property type="evidence" value="ECO:0007669"/>
    <property type="project" value="InterPro"/>
</dbReference>
<dbReference type="GO" id="GO:0010214">
    <property type="term" value="P:seed coat development"/>
    <property type="evidence" value="ECO:0000315"/>
    <property type="project" value="TAIR"/>
</dbReference>
<dbReference type="GO" id="GO:0007035">
    <property type="term" value="P:vacuolar acidification"/>
    <property type="evidence" value="ECO:0000315"/>
    <property type="project" value="TAIR"/>
</dbReference>
<dbReference type="GO" id="GO:0007033">
    <property type="term" value="P:vacuole organization"/>
    <property type="evidence" value="ECO:0000315"/>
    <property type="project" value="TAIR"/>
</dbReference>
<dbReference type="CDD" id="cd02076">
    <property type="entry name" value="P-type_ATPase_H"/>
    <property type="match status" value="1"/>
</dbReference>
<dbReference type="FunFam" id="1.20.1110.10:FF:000045">
    <property type="entry name" value="ATPase 4 plasma membrane-type"/>
    <property type="match status" value="1"/>
</dbReference>
<dbReference type="FunFam" id="2.70.150.10:FF:000004">
    <property type="entry name" value="Plasma membrane ATPase"/>
    <property type="match status" value="1"/>
</dbReference>
<dbReference type="FunFam" id="3.40.1110.10:FF:000004">
    <property type="entry name" value="Plasma membrane ATPase"/>
    <property type="match status" value="1"/>
</dbReference>
<dbReference type="FunFam" id="3.40.50.1000:FF:000211">
    <property type="entry name" value="Plasma membrane ATPase"/>
    <property type="match status" value="1"/>
</dbReference>
<dbReference type="Gene3D" id="6.10.140.890">
    <property type="match status" value="1"/>
</dbReference>
<dbReference type="Gene3D" id="3.40.1110.10">
    <property type="entry name" value="Calcium-transporting ATPase, cytoplasmic domain N"/>
    <property type="match status" value="1"/>
</dbReference>
<dbReference type="Gene3D" id="2.70.150.10">
    <property type="entry name" value="Calcium-transporting ATPase, cytoplasmic transduction domain A"/>
    <property type="match status" value="1"/>
</dbReference>
<dbReference type="Gene3D" id="1.20.1110.10">
    <property type="entry name" value="Calcium-transporting ATPase, transmembrane domain"/>
    <property type="match status" value="1"/>
</dbReference>
<dbReference type="Gene3D" id="3.40.50.1000">
    <property type="entry name" value="HAD superfamily/HAD-like"/>
    <property type="match status" value="1"/>
</dbReference>
<dbReference type="InterPro" id="IPR004014">
    <property type="entry name" value="ATPase_P-typ_cation-transptr_N"/>
</dbReference>
<dbReference type="InterPro" id="IPR023299">
    <property type="entry name" value="ATPase_P-typ_cyto_dom_N"/>
</dbReference>
<dbReference type="InterPro" id="IPR018303">
    <property type="entry name" value="ATPase_P-typ_P_site"/>
</dbReference>
<dbReference type="InterPro" id="IPR023298">
    <property type="entry name" value="ATPase_P-typ_TM_dom_sf"/>
</dbReference>
<dbReference type="InterPro" id="IPR008250">
    <property type="entry name" value="ATPase_P-typ_transduc_dom_A_sf"/>
</dbReference>
<dbReference type="InterPro" id="IPR036412">
    <property type="entry name" value="HAD-like_sf"/>
</dbReference>
<dbReference type="InterPro" id="IPR023214">
    <property type="entry name" value="HAD_sf"/>
</dbReference>
<dbReference type="InterPro" id="IPR006534">
    <property type="entry name" value="P-type_ATPase_IIIA"/>
</dbReference>
<dbReference type="InterPro" id="IPR001757">
    <property type="entry name" value="P_typ_ATPase"/>
</dbReference>
<dbReference type="InterPro" id="IPR044492">
    <property type="entry name" value="P_typ_ATPase_HD_dom"/>
</dbReference>
<dbReference type="NCBIfam" id="TIGR01647">
    <property type="entry name" value="ATPase-IIIA_H"/>
    <property type="match status" value="1"/>
</dbReference>
<dbReference type="NCBIfam" id="TIGR01494">
    <property type="entry name" value="ATPase_P-type"/>
    <property type="match status" value="2"/>
</dbReference>
<dbReference type="PANTHER" id="PTHR42861">
    <property type="entry name" value="CALCIUM-TRANSPORTING ATPASE"/>
    <property type="match status" value="1"/>
</dbReference>
<dbReference type="Pfam" id="PF00690">
    <property type="entry name" value="Cation_ATPase_N"/>
    <property type="match status" value="1"/>
</dbReference>
<dbReference type="Pfam" id="PF00122">
    <property type="entry name" value="E1-E2_ATPase"/>
    <property type="match status" value="1"/>
</dbReference>
<dbReference type="Pfam" id="PF00702">
    <property type="entry name" value="Hydrolase"/>
    <property type="match status" value="1"/>
</dbReference>
<dbReference type="PRINTS" id="PR00119">
    <property type="entry name" value="CATATPASE"/>
</dbReference>
<dbReference type="PRINTS" id="PR00120">
    <property type="entry name" value="HATPASE"/>
</dbReference>
<dbReference type="SFLD" id="SFLDS00003">
    <property type="entry name" value="Haloacid_Dehalogenase"/>
    <property type="match status" value="1"/>
</dbReference>
<dbReference type="SFLD" id="SFLDF00027">
    <property type="entry name" value="p-type_atpase"/>
    <property type="match status" value="1"/>
</dbReference>
<dbReference type="SMART" id="SM00831">
    <property type="entry name" value="Cation_ATPase_N"/>
    <property type="match status" value="1"/>
</dbReference>
<dbReference type="SUPFAM" id="SSF81653">
    <property type="entry name" value="Calcium ATPase, transduction domain A"/>
    <property type="match status" value="1"/>
</dbReference>
<dbReference type="SUPFAM" id="SSF81665">
    <property type="entry name" value="Calcium ATPase, transmembrane domain M"/>
    <property type="match status" value="1"/>
</dbReference>
<dbReference type="SUPFAM" id="SSF56784">
    <property type="entry name" value="HAD-like"/>
    <property type="match status" value="1"/>
</dbReference>
<dbReference type="PROSITE" id="PS00154">
    <property type="entry name" value="ATPASE_E1_E2"/>
    <property type="match status" value="1"/>
</dbReference>
<accession>Q43128</accession>
<comment type="function">
    <text>The plasma membrane H(+) ATPase of plants and fungi generates a proton gradient that drives the active transport of nutrients by H(+)-symport. The resulting external acidification and/or internal alkinization may mediate growth responses.</text>
</comment>
<comment type="catalytic activity">
    <reaction>
        <text>ATP + H2O + H(+)(in) = ADP + phosphate + 2 H(+)(out)</text>
        <dbReference type="Rhea" id="RHEA:20852"/>
        <dbReference type="ChEBI" id="CHEBI:15377"/>
        <dbReference type="ChEBI" id="CHEBI:15378"/>
        <dbReference type="ChEBI" id="CHEBI:30616"/>
        <dbReference type="ChEBI" id="CHEBI:43474"/>
        <dbReference type="ChEBI" id="CHEBI:456216"/>
        <dbReference type="EC" id="7.1.2.1"/>
    </reaction>
</comment>
<comment type="subcellular location">
    <subcellularLocation>
        <location>Membrane</location>
        <topology>Multi-pass membrane protein</topology>
    </subcellularLocation>
</comment>
<comment type="tissue specificity">
    <text evidence="5">Found primarily in developing seeds. Expressed in guard cells, mesophyll cells, leaves and roots (PubMed:15821287).</text>
</comment>
<comment type="similarity">
    <text evidence="6">Belongs to the cation transport ATPase (P-type) (TC 3.A.3) family. Type IIIA subfamily.</text>
</comment>